<sequence length="432" mass="49109">MKTKILFFLFFSTFSFSIFAAPITIAIDPGHGGKDPGAISRNLGIYEKNVTLSIAKELKALLDKDPHFRGVLTRKSDYYISVPERSEIARKFKANYLISIHADSSKSPDRRGASVWVLSNRRANDEMGQWLEDDEKRSELLGGAGKVLSHNNDKYLDQTVLDLQFGHSQRTGYVLGEHILHHFAKVTTLSRSTPQHASLGVLRSPDIPSVLVETGFLSNSEEEKKLNSQTYRRRIAYMIYEGLVAFHSGKTNTLVKDNLVQNIKQNDIKKSGKNNRTSEQNINEDNIKDSGIRHIVKKGESLGSLSNKYHVKVSDIIKLNQLKRKTLWLNESIKIPDNVEIKNKSLTIKENDFHKKQNSLVNNTNKDLKKEKNTQTNNQKNIIPLYHKVTKNQTLYAISREYNIPVNILLSLNPHLKNGKVITGQKIKLREK</sequence>
<feature type="signal peptide" evidence="2">
    <location>
        <begin position="1"/>
        <end position="20"/>
    </location>
</feature>
<feature type="chain" id="PRO_0000006464" description="Probable N-acetylmuramoyl-L-alanine amidase AmiB">
    <location>
        <begin position="21"/>
        <end position="432"/>
    </location>
</feature>
<feature type="domain" description="MurNAc-LAA" evidence="2">
    <location>
        <begin position="25"/>
        <end position="244"/>
    </location>
</feature>
<feature type="domain" description="LysM 1" evidence="3">
    <location>
        <begin position="292"/>
        <end position="335"/>
    </location>
</feature>
<feature type="domain" description="LysM 2" evidence="3">
    <location>
        <begin position="385"/>
        <end position="429"/>
    </location>
</feature>
<organism>
    <name type="scientific">Haemophilus influenzae (strain ATCC 51907 / DSM 11121 / KW20 / Rd)</name>
    <dbReference type="NCBI Taxonomy" id="71421"/>
    <lineage>
        <taxon>Bacteria</taxon>
        <taxon>Pseudomonadati</taxon>
        <taxon>Pseudomonadota</taxon>
        <taxon>Gammaproteobacteria</taxon>
        <taxon>Pasteurellales</taxon>
        <taxon>Pasteurellaceae</taxon>
        <taxon>Haemophilus</taxon>
    </lineage>
</organism>
<comment type="function">
    <text evidence="1">Cell-wall hydrolase involved in septum cleavage during cell division.</text>
</comment>
<comment type="catalytic activity">
    <reaction>
        <text>Hydrolyzes the link between N-acetylmuramoyl residues and L-amino acid residues in certain cell-wall glycopeptides.</text>
        <dbReference type="EC" id="3.5.1.28"/>
    </reaction>
</comment>
<comment type="subcellular location">
    <subcellularLocation>
        <location evidence="1">Periplasm</location>
    </subcellularLocation>
</comment>
<comment type="domain">
    <text>LysM domains are thought to be involved in peptidoglycan binding.</text>
</comment>
<comment type="similarity">
    <text evidence="4">Belongs to the N-acetylmuramoyl-L-alanine amidase 3 family.</text>
</comment>
<keyword id="KW-0961">Cell wall biogenesis/degradation</keyword>
<keyword id="KW-0378">Hydrolase</keyword>
<keyword id="KW-0574">Periplasm</keyword>
<keyword id="KW-1185">Reference proteome</keyword>
<keyword id="KW-0677">Repeat</keyword>
<keyword id="KW-0732">Signal</keyword>
<gene>
    <name type="primary">amiB</name>
    <name type="ordered locus">HI_0066</name>
</gene>
<protein>
    <recommendedName>
        <fullName>Probable N-acetylmuramoyl-L-alanine amidase AmiB</fullName>
        <ecNumber>3.5.1.28</ecNumber>
    </recommendedName>
</protein>
<name>AMIB_HAEIN</name>
<dbReference type="EC" id="3.5.1.28"/>
<dbReference type="EMBL" id="L42023">
    <property type="protein sequence ID" value="AAC21744.1"/>
    <property type="molecule type" value="Genomic_DNA"/>
</dbReference>
<dbReference type="PIR" id="D64046">
    <property type="entry name" value="D64046"/>
</dbReference>
<dbReference type="RefSeq" id="NP_438239.1">
    <property type="nucleotide sequence ID" value="NC_000907.1"/>
</dbReference>
<dbReference type="SMR" id="P44493"/>
<dbReference type="STRING" id="71421.HI_0066"/>
<dbReference type="EnsemblBacteria" id="AAC21744">
    <property type="protein sequence ID" value="AAC21744"/>
    <property type="gene ID" value="HI_0066"/>
</dbReference>
<dbReference type="KEGG" id="hin:HI_0066"/>
<dbReference type="PATRIC" id="fig|71421.8.peg.67"/>
<dbReference type="eggNOG" id="COG0860">
    <property type="taxonomic scope" value="Bacteria"/>
</dbReference>
<dbReference type="eggNOG" id="COG1388">
    <property type="taxonomic scope" value="Bacteria"/>
</dbReference>
<dbReference type="HOGENOM" id="CLU_014322_2_4_6"/>
<dbReference type="OrthoDB" id="9806267at2"/>
<dbReference type="PhylomeDB" id="P44493"/>
<dbReference type="BioCyc" id="HINF71421:G1GJ1-67-MONOMER"/>
<dbReference type="Proteomes" id="UP000000579">
    <property type="component" value="Chromosome"/>
</dbReference>
<dbReference type="GO" id="GO:0030288">
    <property type="term" value="C:outer membrane-bounded periplasmic space"/>
    <property type="evidence" value="ECO:0000318"/>
    <property type="project" value="GO_Central"/>
</dbReference>
<dbReference type="GO" id="GO:0008745">
    <property type="term" value="F:N-acetylmuramoyl-L-alanine amidase activity"/>
    <property type="evidence" value="ECO:0000318"/>
    <property type="project" value="GO_Central"/>
</dbReference>
<dbReference type="GO" id="GO:0071555">
    <property type="term" value="P:cell wall organization"/>
    <property type="evidence" value="ECO:0007669"/>
    <property type="project" value="UniProtKB-KW"/>
</dbReference>
<dbReference type="GO" id="GO:0043093">
    <property type="term" value="P:FtsZ-dependent cytokinesis"/>
    <property type="evidence" value="ECO:0000318"/>
    <property type="project" value="GO_Central"/>
</dbReference>
<dbReference type="GO" id="GO:0009253">
    <property type="term" value="P:peptidoglycan catabolic process"/>
    <property type="evidence" value="ECO:0007669"/>
    <property type="project" value="InterPro"/>
</dbReference>
<dbReference type="CDD" id="cd00118">
    <property type="entry name" value="LysM"/>
    <property type="match status" value="2"/>
</dbReference>
<dbReference type="CDD" id="cd02696">
    <property type="entry name" value="MurNAc-LAA"/>
    <property type="match status" value="1"/>
</dbReference>
<dbReference type="FunFam" id="3.40.630.40:FF:000003">
    <property type="entry name" value="N-acetylmuramoyl-L-alanine amidase AmiB"/>
    <property type="match status" value="1"/>
</dbReference>
<dbReference type="FunFam" id="3.10.350.10:FF:000060">
    <property type="entry name" value="Probable N-acetylmuramoyl-L-alanine amidase AmiB"/>
    <property type="match status" value="1"/>
</dbReference>
<dbReference type="Gene3D" id="3.10.350.10">
    <property type="entry name" value="LysM domain"/>
    <property type="match status" value="2"/>
</dbReference>
<dbReference type="Gene3D" id="3.40.630.40">
    <property type="entry name" value="Zn-dependent exopeptidases"/>
    <property type="match status" value="1"/>
</dbReference>
<dbReference type="InterPro" id="IPR018392">
    <property type="entry name" value="LysM_dom"/>
</dbReference>
<dbReference type="InterPro" id="IPR036779">
    <property type="entry name" value="LysM_dom_sf"/>
</dbReference>
<dbReference type="InterPro" id="IPR002508">
    <property type="entry name" value="MurNAc-LAA_cat"/>
</dbReference>
<dbReference type="InterPro" id="IPR050695">
    <property type="entry name" value="N-acetylmuramoyl_amidase_3"/>
</dbReference>
<dbReference type="PANTHER" id="PTHR30404">
    <property type="entry name" value="N-ACETYLMURAMOYL-L-ALANINE AMIDASE"/>
    <property type="match status" value="1"/>
</dbReference>
<dbReference type="PANTHER" id="PTHR30404:SF6">
    <property type="entry name" value="N-ACETYLMURAMOYL-L-ALANINE AMIDASE AMIB"/>
    <property type="match status" value="1"/>
</dbReference>
<dbReference type="Pfam" id="PF01520">
    <property type="entry name" value="Amidase_3"/>
    <property type="match status" value="1"/>
</dbReference>
<dbReference type="Pfam" id="PF01476">
    <property type="entry name" value="LysM"/>
    <property type="match status" value="2"/>
</dbReference>
<dbReference type="SMART" id="SM00646">
    <property type="entry name" value="Ami_3"/>
    <property type="match status" value="1"/>
</dbReference>
<dbReference type="SMART" id="SM00257">
    <property type="entry name" value="LysM"/>
    <property type="match status" value="2"/>
</dbReference>
<dbReference type="SUPFAM" id="SSF54106">
    <property type="entry name" value="LysM domain"/>
    <property type="match status" value="2"/>
</dbReference>
<dbReference type="SUPFAM" id="SSF53187">
    <property type="entry name" value="Zn-dependent exopeptidases"/>
    <property type="match status" value="1"/>
</dbReference>
<dbReference type="PROSITE" id="PS51782">
    <property type="entry name" value="LYSM"/>
    <property type="match status" value="2"/>
</dbReference>
<reference key="1">
    <citation type="journal article" date="1995" name="Science">
        <title>Whole-genome random sequencing and assembly of Haemophilus influenzae Rd.</title>
        <authorList>
            <person name="Fleischmann R.D."/>
            <person name="Adams M.D."/>
            <person name="White O."/>
            <person name="Clayton R.A."/>
            <person name="Kirkness E.F."/>
            <person name="Kerlavage A.R."/>
            <person name="Bult C.J."/>
            <person name="Tomb J.-F."/>
            <person name="Dougherty B.A."/>
            <person name="Merrick J.M."/>
            <person name="McKenney K."/>
            <person name="Sutton G.G."/>
            <person name="FitzHugh W."/>
            <person name="Fields C.A."/>
            <person name="Gocayne J.D."/>
            <person name="Scott J.D."/>
            <person name="Shirley R."/>
            <person name="Liu L.-I."/>
            <person name="Glodek A."/>
            <person name="Kelley J.M."/>
            <person name="Weidman J.F."/>
            <person name="Phillips C.A."/>
            <person name="Spriggs T."/>
            <person name="Hedblom E."/>
            <person name="Cotton M.D."/>
            <person name="Utterback T.R."/>
            <person name="Hanna M.C."/>
            <person name="Nguyen D.T."/>
            <person name="Saudek D.M."/>
            <person name="Brandon R.C."/>
            <person name="Fine L.D."/>
            <person name="Fritchman J.L."/>
            <person name="Fuhrmann J.L."/>
            <person name="Geoghagen N.S.M."/>
            <person name="Gnehm C.L."/>
            <person name="McDonald L.A."/>
            <person name="Small K.V."/>
            <person name="Fraser C.M."/>
            <person name="Smith H.O."/>
            <person name="Venter J.C."/>
        </authorList>
    </citation>
    <scope>NUCLEOTIDE SEQUENCE [LARGE SCALE GENOMIC DNA]</scope>
    <source>
        <strain>ATCC 51907 / DSM 11121 / KW20 / Rd</strain>
    </source>
</reference>
<proteinExistence type="inferred from homology"/>
<evidence type="ECO:0000250" key="1"/>
<evidence type="ECO:0000255" key="2"/>
<evidence type="ECO:0000255" key="3">
    <source>
        <dbReference type="PROSITE-ProRule" id="PRU01118"/>
    </source>
</evidence>
<evidence type="ECO:0000305" key="4"/>
<accession>P44493</accession>